<sequence length="218" mass="24946">MSKISLDALNVRNALIEKGIETPMIDPTQAKDERRESIAKHMHEVMKLIGLDLRDDSLEETPNRLAKMFIDEIFSGMDYANFPKMTKIKNQMKVSEMVQVNDITLTSTCEHHFVTIDGKVCVAYYPKDWVIGLSKINRIVSFFAQRPQVQERLTEQLLTAFQTILETDDVAVYVKATHFCVKARGIRDTNSYTVTSAYGGVFLEDRDTRKEFLATVQK</sequence>
<name>GCH1_HAEI8</name>
<organism>
    <name type="scientific">Haemophilus influenzae (strain 86-028NP)</name>
    <dbReference type="NCBI Taxonomy" id="281310"/>
    <lineage>
        <taxon>Bacteria</taxon>
        <taxon>Pseudomonadati</taxon>
        <taxon>Pseudomonadota</taxon>
        <taxon>Gammaproteobacteria</taxon>
        <taxon>Pasteurellales</taxon>
        <taxon>Pasteurellaceae</taxon>
        <taxon>Haemophilus</taxon>
    </lineage>
</organism>
<evidence type="ECO:0000250" key="1"/>
<evidence type="ECO:0000255" key="2">
    <source>
        <dbReference type="HAMAP-Rule" id="MF_00223"/>
    </source>
</evidence>
<dbReference type="EC" id="3.5.4.16" evidence="2"/>
<dbReference type="EMBL" id="CP000057">
    <property type="protein sequence ID" value="AAX88473.1"/>
    <property type="molecule type" value="Genomic_DNA"/>
</dbReference>
<dbReference type="RefSeq" id="WP_005636037.1">
    <property type="nucleotide sequence ID" value="NC_007146.2"/>
</dbReference>
<dbReference type="SMR" id="Q4QKH4"/>
<dbReference type="GeneID" id="56958132"/>
<dbReference type="KEGG" id="hit:NTHI1683"/>
<dbReference type="HOGENOM" id="CLU_049768_3_2_6"/>
<dbReference type="UniPathway" id="UPA00848">
    <property type="reaction ID" value="UER00151"/>
</dbReference>
<dbReference type="Proteomes" id="UP000002525">
    <property type="component" value="Chromosome"/>
</dbReference>
<dbReference type="GO" id="GO:0005737">
    <property type="term" value="C:cytoplasm"/>
    <property type="evidence" value="ECO:0007669"/>
    <property type="project" value="TreeGrafter"/>
</dbReference>
<dbReference type="GO" id="GO:0005525">
    <property type="term" value="F:GTP binding"/>
    <property type="evidence" value="ECO:0007669"/>
    <property type="project" value="UniProtKB-KW"/>
</dbReference>
<dbReference type="GO" id="GO:0003934">
    <property type="term" value="F:GTP cyclohydrolase I activity"/>
    <property type="evidence" value="ECO:0007669"/>
    <property type="project" value="UniProtKB-UniRule"/>
</dbReference>
<dbReference type="GO" id="GO:0008270">
    <property type="term" value="F:zinc ion binding"/>
    <property type="evidence" value="ECO:0007669"/>
    <property type="project" value="UniProtKB-UniRule"/>
</dbReference>
<dbReference type="GO" id="GO:0006730">
    <property type="term" value="P:one-carbon metabolic process"/>
    <property type="evidence" value="ECO:0007669"/>
    <property type="project" value="UniProtKB-UniRule"/>
</dbReference>
<dbReference type="GO" id="GO:0006729">
    <property type="term" value="P:tetrahydrobiopterin biosynthetic process"/>
    <property type="evidence" value="ECO:0007669"/>
    <property type="project" value="TreeGrafter"/>
</dbReference>
<dbReference type="GO" id="GO:0046654">
    <property type="term" value="P:tetrahydrofolate biosynthetic process"/>
    <property type="evidence" value="ECO:0007669"/>
    <property type="project" value="UniProtKB-UniRule"/>
</dbReference>
<dbReference type="CDD" id="cd00642">
    <property type="entry name" value="GTP_cyclohydro1"/>
    <property type="match status" value="1"/>
</dbReference>
<dbReference type="FunFam" id="3.30.1130.10:FF:000001">
    <property type="entry name" value="GTP cyclohydrolase 1"/>
    <property type="match status" value="1"/>
</dbReference>
<dbReference type="Gene3D" id="1.10.286.10">
    <property type="match status" value="1"/>
</dbReference>
<dbReference type="Gene3D" id="3.30.1130.10">
    <property type="match status" value="1"/>
</dbReference>
<dbReference type="HAMAP" id="MF_00223">
    <property type="entry name" value="FolE"/>
    <property type="match status" value="1"/>
</dbReference>
<dbReference type="InterPro" id="IPR043133">
    <property type="entry name" value="GTP-CH-I_C/QueF"/>
</dbReference>
<dbReference type="InterPro" id="IPR043134">
    <property type="entry name" value="GTP-CH-I_N"/>
</dbReference>
<dbReference type="InterPro" id="IPR001474">
    <property type="entry name" value="GTP_CycHdrlase_I"/>
</dbReference>
<dbReference type="InterPro" id="IPR018234">
    <property type="entry name" value="GTP_CycHdrlase_I_CS"/>
</dbReference>
<dbReference type="InterPro" id="IPR020602">
    <property type="entry name" value="GTP_CycHdrlase_I_dom"/>
</dbReference>
<dbReference type="NCBIfam" id="TIGR00063">
    <property type="entry name" value="folE"/>
    <property type="match status" value="1"/>
</dbReference>
<dbReference type="NCBIfam" id="NF006824">
    <property type="entry name" value="PRK09347.1-1"/>
    <property type="match status" value="1"/>
</dbReference>
<dbReference type="NCBIfam" id="NF006826">
    <property type="entry name" value="PRK09347.1-3"/>
    <property type="match status" value="1"/>
</dbReference>
<dbReference type="PANTHER" id="PTHR11109:SF7">
    <property type="entry name" value="GTP CYCLOHYDROLASE 1"/>
    <property type="match status" value="1"/>
</dbReference>
<dbReference type="PANTHER" id="PTHR11109">
    <property type="entry name" value="GTP CYCLOHYDROLASE I"/>
    <property type="match status" value="1"/>
</dbReference>
<dbReference type="Pfam" id="PF01227">
    <property type="entry name" value="GTP_cyclohydroI"/>
    <property type="match status" value="1"/>
</dbReference>
<dbReference type="SUPFAM" id="SSF55620">
    <property type="entry name" value="Tetrahydrobiopterin biosynthesis enzymes-like"/>
    <property type="match status" value="1"/>
</dbReference>
<dbReference type="PROSITE" id="PS00859">
    <property type="entry name" value="GTP_CYCLOHYDROL_1_1"/>
    <property type="match status" value="1"/>
</dbReference>
<dbReference type="PROSITE" id="PS00860">
    <property type="entry name" value="GTP_CYCLOHYDROL_1_2"/>
    <property type="match status" value="1"/>
</dbReference>
<gene>
    <name evidence="2" type="primary">folE</name>
    <name type="ordered locus">NTHI1683</name>
</gene>
<protein>
    <recommendedName>
        <fullName evidence="2">GTP cyclohydrolase 1</fullName>
        <ecNumber evidence="2">3.5.4.16</ecNumber>
    </recommendedName>
    <alternativeName>
        <fullName evidence="2">GTP cyclohydrolase I</fullName>
        <shortName evidence="2">GTP-CH-I</shortName>
    </alternativeName>
</protein>
<reference key="1">
    <citation type="journal article" date="2005" name="J. Bacteriol.">
        <title>Genomic sequence of an otitis media isolate of nontypeable Haemophilus influenzae: comparative study with H. influenzae serotype d, strain KW20.</title>
        <authorList>
            <person name="Harrison A."/>
            <person name="Dyer D.W."/>
            <person name="Gillaspy A."/>
            <person name="Ray W.C."/>
            <person name="Mungur R."/>
            <person name="Carson M.B."/>
            <person name="Zhong H."/>
            <person name="Gipson J."/>
            <person name="Gipson M."/>
            <person name="Johnson L.S."/>
            <person name="Lewis L."/>
            <person name="Bakaletz L.O."/>
            <person name="Munson R.S. Jr."/>
        </authorList>
    </citation>
    <scope>NUCLEOTIDE SEQUENCE [LARGE SCALE GENOMIC DNA]</scope>
    <source>
        <strain>86-028NP</strain>
    </source>
</reference>
<proteinExistence type="inferred from homology"/>
<keyword id="KW-0342">GTP-binding</keyword>
<keyword id="KW-0378">Hydrolase</keyword>
<keyword id="KW-0479">Metal-binding</keyword>
<keyword id="KW-0547">Nucleotide-binding</keyword>
<keyword id="KW-0554">One-carbon metabolism</keyword>
<keyword id="KW-0862">Zinc</keyword>
<feature type="chain" id="PRO_1000043694" description="GTP cyclohydrolase 1">
    <location>
        <begin position="1"/>
        <end position="218"/>
    </location>
</feature>
<feature type="binding site" evidence="2">
    <location>
        <position position="109"/>
    </location>
    <ligand>
        <name>Zn(2+)</name>
        <dbReference type="ChEBI" id="CHEBI:29105"/>
    </ligand>
</feature>
<feature type="binding site" evidence="2">
    <location>
        <position position="112"/>
    </location>
    <ligand>
        <name>Zn(2+)</name>
        <dbReference type="ChEBI" id="CHEBI:29105"/>
    </ligand>
</feature>
<feature type="binding site" evidence="2">
    <location>
        <position position="180"/>
    </location>
    <ligand>
        <name>Zn(2+)</name>
        <dbReference type="ChEBI" id="CHEBI:29105"/>
    </ligand>
</feature>
<accession>Q4QKH4</accession>
<comment type="catalytic activity">
    <reaction evidence="2">
        <text>GTP + H2O = 7,8-dihydroneopterin 3'-triphosphate + formate + H(+)</text>
        <dbReference type="Rhea" id="RHEA:17473"/>
        <dbReference type="ChEBI" id="CHEBI:15377"/>
        <dbReference type="ChEBI" id="CHEBI:15378"/>
        <dbReference type="ChEBI" id="CHEBI:15740"/>
        <dbReference type="ChEBI" id="CHEBI:37565"/>
        <dbReference type="ChEBI" id="CHEBI:58462"/>
        <dbReference type="EC" id="3.5.4.16"/>
    </reaction>
</comment>
<comment type="pathway">
    <text evidence="2">Cofactor biosynthesis; 7,8-dihydroneopterin triphosphate biosynthesis; 7,8-dihydroneopterin triphosphate from GTP: step 1/1.</text>
</comment>
<comment type="subunit">
    <text evidence="1">Toroid-shaped homodecamer, composed of two pentamers of five dimers.</text>
</comment>
<comment type="similarity">
    <text evidence="2">Belongs to the GTP cyclohydrolase I family.</text>
</comment>